<comment type="function">
    <text evidence="1">The key enzymatic reactions in nitrogen fixation are catalyzed by the nitrogenase complex, which has 2 components: the iron protein and the molybdenum-iron protein.</text>
</comment>
<comment type="catalytic activity">
    <reaction>
        <text>N2 + 8 reduced [2Fe-2S]-[ferredoxin] + 16 ATP + 16 H2O = H2 + 8 oxidized [2Fe-2S]-[ferredoxin] + 2 NH4(+) + 16 ADP + 16 phosphate + 6 H(+)</text>
        <dbReference type="Rhea" id="RHEA:21448"/>
        <dbReference type="Rhea" id="RHEA-COMP:10000"/>
        <dbReference type="Rhea" id="RHEA-COMP:10001"/>
        <dbReference type="ChEBI" id="CHEBI:15377"/>
        <dbReference type="ChEBI" id="CHEBI:15378"/>
        <dbReference type="ChEBI" id="CHEBI:17997"/>
        <dbReference type="ChEBI" id="CHEBI:18276"/>
        <dbReference type="ChEBI" id="CHEBI:28938"/>
        <dbReference type="ChEBI" id="CHEBI:30616"/>
        <dbReference type="ChEBI" id="CHEBI:33737"/>
        <dbReference type="ChEBI" id="CHEBI:33738"/>
        <dbReference type="ChEBI" id="CHEBI:43474"/>
        <dbReference type="ChEBI" id="CHEBI:456216"/>
        <dbReference type="EC" id="1.18.6.1"/>
    </reaction>
</comment>
<comment type="cofactor">
    <cofactor evidence="1">
        <name>[4Fe-4S] cluster</name>
        <dbReference type="ChEBI" id="CHEBI:49883"/>
    </cofactor>
    <text evidence="1">Binds 1 [4Fe-4S] cluster per dimer.</text>
</comment>
<comment type="subunit">
    <text evidence="1">Homodimer.</text>
</comment>
<comment type="PTM">
    <text evidence="1">The reversible ADP-ribosylation of Arg-100 inactivates the nitrogenase reductase and regulates nitrogenase activity.</text>
</comment>
<comment type="similarity">
    <text evidence="3">Belongs to the NifH/BchL/ChlL family.</text>
</comment>
<dbReference type="EC" id="1.18.6.1"/>
<dbReference type="EMBL" id="X56072">
    <property type="protein sequence ID" value="CAA39552.1"/>
    <property type="molecule type" value="Genomic_DNA"/>
</dbReference>
<dbReference type="SMR" id="P54799"/>
<dbReference type="GO" id="GO:0051539">
    <property type="term" value="F:4 iron, 4 sulfur cluster binding"/>
    <property type="evidence" value="ECO:0007669"/>
    <property type="project" value="UniProtKB-KW"/>
</dbReference>
<dbReference type="GO" id="GO:0005524">
    <property type="term" value="F:ATP binding"/>
    <property type="evidence" value="ECO:0007669"/>
    <property type="project" value="UniProtKB-UniRule"/>
</dbReference>
<dbReference type="GO" id="GO:0046872">
    <property type="term" value="F:metal ion binding"/>
    <property type="evidence" value="ECO:0007669"/>
    <property type="project" value="UniProtKB-KW"/>
</dbReference>
<dbReference type="GO" id="GO:0016163">
    <property type="term" value="F:nitrogenase activity"/>
    <property type="evidence" value="ECO:0007669"/>
    <property type="project" value="UniProtKB-UniRule"/>
</dbReference>
<dbReference type="GO" id="GO:0009399">
    <property type="term" value="P:nitrogen fixation"/>
    <property type="evidence" value="ECO:0007669"/>
    <property type="project" value="UniProtKB-UniRule"/>
</dbReference>
<dbReference type="CDD" id="cd02040">
    <property type="entry name" value="NifH"/>
    <property type="match status" value="1"/>
</dbReference>
<dbReference type="Gene3D" id="3.40.50.300">
    <property type="entry name" value="P-loop containing nucleotide triphosphate hydrolases"/>
    <property type="match status" value="1"/>
</dbReference>
<dbReference type="HAMAP" id="MF_00533">
    <property type="entry name" value="NifH"/>
    <property type="match status" value="1"/>
</dbReference>
<dbReference type="InterPro" id="IPR030655">
    <property type="entry name" value="NifH/chlL_CS"/>
</dbReference>
<dbReference type="InterPro" id="IPR000392">
    <property type="entry name" value="NifH/frxC"/>
</dbReference>
<dbReference type="InterPro" id="IPR005977">
    <property type="entry name" value="Nitrogenase_Fe_NifH"/>
</dbReference>
<dbReference type="InterPro" id="IPR027417">
    <property type="entry name" value="P-loop_NTPase"/>
</dbReference>
<dbReference type="NCBIfam" id="TIGR01287">
    <property type="entry name" value="nifH"/>
    <property type="match status" value="1"/>
</dbReference>
<dbReference type="PANTHER" id="PTHR42864">
    <property type="entry name" value="LIGHT-INDEPENDENT PROTOCHLOROPHYLLIDE REDUCTASE IRON-SULFUR ATP-BINDING PROTEIN"/>
    <property type="match status" value="1"/>
</dbReference>
<dbReference type="PANTHER" id="PTHR42864:SF2">
    <property type="entry name" value="LIGHT-INDEPENDENT PROTOCHLOROPHYLLIDE REDUCTASE IRON-SULFUR ATP-BINDING PROTEIN"/>
    <property type="match status" value="1"/>
</dbReference>
<dbReference type="Pfam" id="PF00142">
    <property type="entry name" value="Fer4_NifH"/>
    <property type="match status" value="1"/>
</dbReference>
<dbReference type="PIRSF" id="PIRSF000363">
    <property type="entry name" value="Nitrogenase_iron"/>
    <property type="match status" value="1"/>
</dbReference>
<dbReference type="PRINTS" id="PR00091">
    <property type="entry name" value="NITROGNASEII"/>
</dbReference>
<dbReference type="SUPFAM" id="SSF52540">
    <property type="entry name" value="P-loop containing nucleoside triphosphate hydrolases"/>
    <property type="match status" value="1"/>
</dbReference>
<dbReference type="PROSITE" id="PS00746">
    <property type="entry name" value="NIFH_FRXC_1"/>
    <property type="match status" value="1"/>
</dbReference>
<dbReference type="PROSITE" id="PS00692">
    <property type="entry name" value="NIFH_FRXC_2"/>
    <property type="match status" value="1"/>
</dbReference>
<dbReference type="PROSITE" id="PS51026">
    <property type="entry name" value="NIFH_FRXC_3"/>
    <property type="match status" value="1"/>
</dbReference>
<keyword id="KW-0004">4Fe-4S</keyword>
<keyword id="KW-0013">ADP-ribosylation</keyword>
<keyword id="KW-0067">ATP-binding</keyword>
<keyword id="KW-0408">Iron</keyword>
<keyword id="KW-0411">Iron-sulfur</keyword>
<keyword id="KW-0479">Metal-binding</keyword>
<keyword id="KW-0535">Nitrogen fixation</keyword>
<keyword id="KW-0547">Nucleotide-binding</keyword>
<keyword id="KW-0560">Oxidoreductase</keyword>
<reference key="1">
    <citation type="journal article" date="1991" name="Res. Microbiol.">
        <title>Nucleotide sequence of nifH regions from Methanobacterium ivanovii and Methanosarcina barkeri 227 and characterization of glnB-like genes.</title>
        <authorList>
            <person name="Sibold L."/>
            <person name="Henriquet M."/>
            <person name="Possot O."/>
            <person name="Aubert J.-P."/>
        </authorList>
    </citation>
    <scope>NUCLEOTIDE SEQUENCE [GENOMIC DNA]</scope>
    <source>
        <strain>ATCC 43241 / DSM 1538 / 227</strain>
    </source>
</reference>
<name>NIFH1_METBA</name>
<organism>
    <name type="scientific">Methanosarcina barkeri</name>
    <dbReference type="NCBI Taxonomy" id="2208"/>
    <lineage>
        <taxon>Archaea</taxon>
        <taxon>Methanobacteriati</taxon>
        <taxon>Methanobacteriota</taxon>
        <taxon>Stenosarchaea group</taxon>
        <taxon>Methanomicrobia</taxon>
        <taxon>Methanosarcinales</taxon>
        <taxon>Methanosarcinaceae</taxon>
        <taxon>Methanosarcina</taxon>
    </lineage>
</organism>
<evidence type="ECO:0000250" key="1"/>
<evidence type="ECO:0000255" key="2"/>
<evidence type="ECO:0000305" key="3"/>
<sequence length="275" mass="30079">MTRKIAFYGKGGIGKSTTQQNTAAAMAYYHGKKIFIHGCDPKADCTRLVLGGVAQTTIMDTLRELGEDAVTAENVINTGFDGIKCVESGGPEPGVGCAGRGVITAINLMEEMGAYSEDLDFIHFDVLGDVVCGGFAMPIREGKAQEVYIVASGEMMATYAANNICKGLLKYAEQSGVRLGGIICNSRRVDNELEMMEEFASALGTQLLYFVPRDNIVQKAEFNKKTVVEYDPTCNQALEYKELAKKILENDMFVIPKPLSMDQLEKMVERYGLMD</sequence>
<accession>P54799</accession>
<protein>
    <recommendedName>
        <fullName>Nitrogenase iron protein 1</fullName>
        <ecNumber>1.18.6.1</ecNumber>
    </recommendedName>
    <alternativeName>
        <fullName>Nitrogenase Fe protein 1</fullName>
    </alternativeName>
    <alternativeName>
        <fullName>Nitrogenase component II</fullName>
    </alternativeName>
    <alternativeName>
        <fullName>Nitrogenase reductase</fullName>
    </alternativeName>
</protein>
<gene>
    <name type="primary">nifH1</name>
</gene>
<proteinExistence type="inferred from homology"/>
<feature type="chain" id="PRO_0000139535" description="Nitrogenase iron protein 1">
    <location>
        <begin position="1"/>
        <end position="275"/>
    </location>
</feature>
<feature type="binding site" evidence="2">
    <location>
        <begin position="9"/>
        <end position="16"/>
    </location>
    <ligand>
        <name>ATP</name>
        <dbReference type="ChEBI" id="CHEBI:30616"/>
    </ligand>
</feature>
<feature type="binding site" evidence="1">
    <location>
        <position position="97"/>
    </location>
    <ligand>
        <name>[4Fe-4S] cluster</name>
        <dbReference type="ChEBI" id="CHEBI:49883"/>
        <note>ligand shared between dimeric partners</note>
    </ligand>
</feature>
<feature type="binding site" evidence="1">
    <location>
        <position position="132"/>
    </location>
    <ligand>
        <name>[4Fe-4S] cluster</name>
        <dbReference type="ChEBI" id="CHEBI:49883"/>
        <note>ligand shared between dimeric partners</note>
    </ligand>
</feature>
<feature type="modified residue" description="ADP-ribosylarginine; by dinitrogenase reductase ADP-ribosyltransferase" evidence="1">
    <location>
        <position position="100"/>
    </location>
</feature>